<protein>
    <recommendedName>
        <fullName>Uncharacterized protein Mb0050</fullName>
    </recommendedName>
</protein>
<name>Y050_MYCBO</name>
<sequence>MDYTLRRRSLLAEVYSGRTGVSEVCDANPYLLRAAKFHGKPSRVICPICRKEQLTLVSWVFGEHLGAVSGSARTAEELILLATRFSEFAVHVVEVCRTCSWNHLVKSYVLGAARPARPPRGSGGTRTARNGARTASE</sequence>
<accession>P64678</accession>
<accession>A0A1R3XUC3</accession>
<accession>P71706</accession>
<accession>X2BDV4</accession>
<dbReference type="EMBL" id="LT708304">
    <property type="protein sequence ID" value="SIT98412.1"/>
    <property type="molecule type" value="Genomic_DNA"/>
</dbReference>
<dbReference type="RefSeq" id="NP_853719.1">
    <property type="nucleotide sequence ID" value="NC_002945.3"/>
</dbReference>
<dbReference type="KEGG" id="mbo:BQ2027_MB0050"/>
<dbReference type="PATRIC" id="fig|233413.5.peg.56"/>
<dbReference type="Proteomes" id="UP000001419">
    <property type="component" value="Chromosome"/>
</dbReference>
<dbReference type="InterPro" id="IPR035169">
    <property type="entry name" value="DUF5318"/>
</dbReference>
<dbReference type="Pfam" id="PF17249">
    <property type="entry name" value="DUF5318"/>
    <property type="match status" value="1"/>
</dbReference>
<proteinExistence type="predicted"/>
<feature type="chain" id="PRO_0000103659" description="Uncharacterized protein Mb0050">
    <location>
        <begin position="1"/>
        <end position="137"/>
    </location>
</feature>
<feature type="region of interest" description="Disordered" evidence="1">
    <location>
        <begin position="116"/>
        <end position="137"/>
    </location>
</feature>
<feature type="compositionally biased region" description="Polar residues" evidence="1">
    <location>
        <begin position="125"/>
        <end position="137"/>
    </location>
</feature>
<evidence type="ECO:0000256" key="1">
    <source>
        <dbReference type="SAM" id="MobiDB-lite"/>
    </source>
</evidence>
<organism>
    <name type="scientific">Mycobacterium bovis (strain ATCC BAA-935 / AF2122/97)</name>
    <dbReference type="NCBI Taxonomy" id="233413"/>
    <lineage>
        <taxon>Bacteria</taxon>
        <taxon>Bacillati</taxon>
        <taxon>Actinomycetota</taxon>
        <taxon>Actinomycetes</taxon>
        <taxon>Mycobacteriales</taxon>
        <taxon>Mycobacteriaceae</taxon>
        <taxon>Mycobacterium</taxon>
        <taxon>Mycobacterium tuberculosis complex</taxon>
    </lineage>
</organism>
<gene>
    <name type="ordered locus">BQ2027_MB0050</name>
</gene>
<keyword id="KW-1185">Reference proteome</keyword>
<reference key="1">
    <citation type="journal article" date="2003" name="Proc. Natl. Acad. Sci. U.S.A.">
        <title>The complete genome sequence of Mycobacterium bovis.</title>
        <authorList>
            <person name="Garnier T."/>
            <person name="Eiglmeier K."/>
            <person name="Camus J.-C."/>
            <person name="Medina N."/>
            <person name="Mansoor H."/>
            <person name="Pryor M."/>
            <person name="Duthoy S."/>
            <person name="Grondin S."/>
            <person name="Lacroix C."/>
            <person name="Monsempe C."/>
            <person name="Simon S."/>
            <person name="Harris B."/>
            <person name="Atkin R."/>
            <person name="Doggett J."/>
            <person name="Mayes R."/>
            <person name="Keating L."/>
            <person name="Wheeler P.R."/>
            <person name="Parkhill J."/>
            <person name="Barrell B.G."/>
            <person name="Cole S.T."/>
            <person name="Gordon S.V."/>
            <person name="Hewinson R.G."/>
        </authorList>
    </citation>
    <scope>NUCLEOTIDE SEQUENCE [LARGE SCALE GENOMIC DNA]</scope>
    <source>
        <strain>ATCC BAA-935 / AF2122/97</strain>
    </source>
</reference>
<reference key="2">
    <citation type="journal article" date="2017" name="Genome Announc.">
        <title>Updated reference genome sequence and annotation of Mycobacterium bovis AF2122/97.</title>
        <authorList>
            <person name="Malone K.M."/>
            <person name="Farrell D."/>
            <person name="Stuber T.P."/>
            <person name="Schubert O.T."/>
            <person name="Aebersold R."/>
            <person name="Robbe-Austerman S."/>
            <person name="Gordon S.V."/>
        </authorList>
    </citation>
    <scope>NUCLEOTIDE SEQUENCE [LARGE SCALE GENOMIC DNA]</scope>
    <scope>GENOME REANNOTATION</scope>
    <source>
        <strain>ATCC BAA-935 / AF2122/97</strain>
    </source>
</reference>